<feature type="signal peptide" evidence="2">
    <location>
        <begin position="1"/>
        <end position="25"/>
    </location>
</feature>
<feature type="chain" id="PRO_0000320273" description="Probable TonB-dependent receptor NMB1497">
    <location>
        <begin position="26"/>
        <end position="921"/>
    </location>
</feature>
<feature type="domain" description="TBDR plug" evidence="3">
    <location>
        <begin position="53"/>
        <end position="174"/>
    </location>
</feature>
<feature type="domain" description="TBDR beta-barrel" evidence="3">
    <location>
        <begin position="185"/>
        <end position="921"/>
    </location>
</feature>
<feature type="short sequence motif" description="TonB C-terminal box">
    <location>
        <begin position="904"/>
        <end position="921"/>
    </location>
</feature>
<keyword id="KW-0998">Cell outer membrane</keyword>
<keyword id="KW-0472">Membrane</keyword>
<keyword id="KW-0675">Receptor</keyword>
<keyword id="KW-1185">Reference proteome</keyword>
<keyword id="KW-0732">Signal</keyword>
<keyword id="KW-0798">TonB box</keyword>
<keyword id="KW-0812">Transmembrane</keyword>
<keyword id="KW-1134">Transmembrane beta strand</keyword>
<keyword id="KW-0813">Transport</keyword>
<sequence length="921" mass="104222">MRSSFRLKPICFYLMGVTLYHYSYAEDAGRAGSEAQIQVLEDVHVKAKRVPKDKKVFTDARAVSTRQDIFKSSENLDNIVRSIPGAFTQQDKSSGIVSLNIRGDSGFGRVNTMVDGITQTFYSTSTDAGRAGGSSQFGASVDSNFIAGLDVVKGSFSGSAGINSLAGSANLRTLGVDDVVQGNNTYGLLLKGLTGTNSTKGNAMAAIGARKWLESGASVGVLYGHSRRSVAQNYRVGGGGQHIGNFGAEYLERRKQRYFVQEGALKFNSDSGKWERDLQRQQWKYKPYKNYNNQELQKYIEEHDKSWRENLAPQYDITPIDPSSLKQQSAGNLFKLEYDGVFNKYTAQFRDLNTKIGSRKIINRNYQFNYGLSLNPYTNLNLTAAYNSGRQKYPKGSKFTGWGLLKDFETYNNAKILDLNNTATFRLPRETELQTTLGFNYFHNEYGKNRFPEELGLFFDGPDQDNGLYSYLGRFKGDKGLLPQKSTIVQPAGSQYFNTFYFDAALKKDIYRLNYSTNTVGYRFGGEYTGYYGSDDEFKRAFGENSPTYKKHCNRSCGIYEPVLKKYGKKRANNHSVSISADFGDYFMPFASYSRTHRMPNIQEMYFSQIGDSGVHTALKPERANTWQFGFNTYKKGLLKQDDTLGLKLVGYRSRIDNYIHNVYGKWWDLNGDIPSWVSSTGLAYTIQHRNFKDKVHKHGFELELNYDYGRFFTNLSYAYQKSTQPTNFSDASESPNNASKEDQLKQGYGLSRVSALPRDYGRLEVGTRWLGNKLTLGGAMRYFGKSIRATAEERYIDGTNGGNTSNFRQLGKRSIKQTETLARQPLIFDFYAAYEPKKNLIFRAEVKNLFDRRYIDPLDAGNDAATQRYYSSFDPKDKDEDVTCNADKTLCNGKYGGTSKSVLTNFARGRTFLMTMSYKF</sequence>
<proteinExistence type="evidence at protein level"/>
<dbReference type="EMBL" id="AE002098">
    <property type="protein sequence ID" value="AAF41853.1"/>
    <property type="molecule type" value="Genomic_DNA"/>
</dbReference>
<dbReference type="RefSeq" id="NP_274505.1">
    <property type="nucleotide sequence ID" value="NC_003112.2"/>
</dbReference>
<dbReference type="STRING" id="122586.NMB1497"/>
<dbReference type="TCDB" id="1.B.14.7.2">
    <property type="family name" value="the outer membrane receptor (omr) family"/>
</dbReference>
<dbReference type="PaxDb" id="122586-NMB1497"/>
<dbReference type="KEGG" id="nme:NMB1497"/>
<dbReference type="PATRIC" id="fig|122586.8.peg.1893"/>
<dbReference type="HOGENOM" id="CLU_008287_19_1_4"/>
<dbReference type="InParanoid" id="Q7DDB6"/>
<dbReference type="OrthoDB" id="6046653at2"/>
<dbReference type="Proteomes" id="UP000000425">
    <property type="component" value="Chromosome"/>
</dbReference>
<dbReference type="GO" id="GO:0009279">
    <property type="term" value="C:cell outer membrane"/>
    <property type="evidence" value="ECO:0000318"/>
    <property type="project" value="GO_Central"/>
</dbReference>
<dbReference type="GO" id="GO:0015344">
    <property type="term" value="F:siderophore uptake transmembrane transporter activity"/>
    <property type="evidence" value="ECO:0000318"/>
    <property type="project" value="GO_Central"/>
</dbReference>
<dbReference type="GO" id="GO:0044718">
    <property type="term" value="P:siderophore transmembrane transport"/>
    <property type="evidence" value="ECO:0000318"/>
    <property type="project" value="GO_Central"/>
</dbReference>
<dbReference type="Gene3D" id="2.40.170.20">
    <property type="entry name" value="TonB-dependent receptor, beta-barrel domain"/>
    <property type="match status" value="1"/>
</dbReference>
<dbReference type="Gene3D" id="2.170.130.10">
    <property type="entry name" value="TonB-dependent receptor, plug domain"/>
    <property type="match status" value="1"/>
</dbReference>
<dbReference type="InterPro" id="IPR012910">
    <property type="entry name" value="Plug_dom"/>
</dbReference>
<dbReference type="InterPro" id="IPR037066">
    <property type="entry name" value="Plug_dom_sf"/>
</dbReference>
<dbReference type="InterPro" id="IPR039426">
    <property type="entry name" value="TonB-dep_rcpt-like"/>
</dbReference>
<dbReference type="InterPro" id="IPR000531">
    <property type="entry name" value="TonB-dep_rcpt_b-brl"/>
</dbReference>
<dbReference type="InterPro" id="IPR036942">
    <property type="entry name" value="TonB_rcpt_b-brl_sf"/>
</dbReference>
<dbReference type="InterPro" id="IPR010917">
    <property type="entry name" value="TonB_rcpt_CS"/>
</dbReference>
<dbReference type="PANTHER" id="PTHR30069">
    <property type="entry name" value="TONB-DEPENDENT OUTER MEMBRANE RECEPTOR"/>
    <property type="match status" value="1"/>
</dbReference>
<dbReference type="PANTHER" id="PTHR30069:SF50">
    <property type="entry name" value="TONB-DEPENDENT RECEPTOR HI_1217-RELATED"/>
    <property type="match status" value="1"/>
</dbReference>
<dbReference type="Pfam" id="PF07715">
    <property type="entry name" value="Plug"/>
    <property type="match status" value="1"/>
</dbReference>
<dbReference type="Pfam" id="PF00593">
    <property type="entry name" value="TonB_dep_Rec_b-barrel"/>
    <property type="match status" value="1"/>
</dbReference>
<dbReference type="SUPFAM" id="SSF56935">
    <property type="entry name" value="Porins"/>
    <property type="match status" value="1"/>
</dbReference>
<dbReference type="PROSITE" id="PS01156">
    <property type="entry name" value="TONB_DEPENDENT_REC_2"/>
    <property type="match status" value="1"/>
</dbReference>
<dbReference type="PROSITE" id="PS52016">
    <property type="entry name" value="TONB_DEPENDENT_REC_3"/>
    <property type="match status" value="1"/>
</dbReference>
<evidence type="ECO:0000250" key="1"/>
<evidence type="ECO:0000255" key="2"/>
<evidence type="ECO:0000255" key="3">
    <source>
        <dbReference type="PROSITE-ProRule" id="PRU01360"/>
    </source>
</evidence>
<evidence type="ECO:0000305" key="4"/>
<organism>
    <name type="scientific">Neisseria meningitidis serogroup B (strain ATCC BAA-335 / MC58)</name>
    <dbReference type="NCBI Taxonomy" id="122586"/>
    <lineage>
        <taxon>Bacteria</taxon>
        <taxon>Pseudomonadati</taxon>
        <taxon>Pseudomonadota</taxon>
        <taxon>Betaproteobacteria</taxon>
        <taxon>Neisseriales</taxon>
        <taxon>Neisseriaceae</taxon>
        <taxon>Neisseria</taxon>
    </lineage>
</organism>
<gene>
    <name type="ordered locus">NMB1497</name>
</gene>
<comment type="function">
    <text evidence="1">Probable receptor, TonB-dependent.</text>
</comment>
<comment type="subcellular location">
    <subcellularLocation>
        <location evidence="3 4">Cell outer membrane</location>
        <topology evidence="3">Multi-pass membrane protein</topology>
    </subcellularLocation>
</comment>
<comment type="miscellaneous">
    <text>Present in outer membrane vesicle formulations which are used as vaccines in human.</text>
</comment>
<comment type="similarity">
    <text evidence="4">Belongs to the TonB-dependent receptor family.</text>
</comment>
<accession>Q7DDB6</accession>
<protein>
    <recommendedName>
        <fullName>Probable TonB-dependent receptor NMB1497</fullName>
    </recommendedName>
</protein>
<name>Y1497_NEIMB</name>
<reference key="1">
    <citation type="journal article" date="2000" name="Science">
        <title>Complete genome sequence of Neisseria meningitidis serogroup B strain MC58.</title>
        <authorList>
            <person name="Tettelin H."/>
            <person name="Saunders N.J."/>
            <person name="Heidelberg J.F."/>
            <person name="Jeffries A.C."/>
            <person name="Nelson K.E."/>
            <person name="Eisen J.A."/>
            <person name="Ketchum K.A."/>
            <person name="Hood D.W."/>
            <person name="Peden J.F."/>
            <person name="Dodson R.J."/>
            <person name="Nelson W.C."/>
            <person name="Gwinn M.L."/>
            <person name="DeBoy R.T."/>
            <person name="Peterson J.D."/>
            <person name="Hickey E.K."/>
            <person name="Haft D.H."/>
            <person name="Salzberg S.L."/>
            <person name="White O."/>
            <person name="Fleischmann R.D."/>
            <person name="Dougherty B.A."/>
            <person name="Mason T.M."/>
            <person name="Ciecko A."/>
            <person name="Parksey D.S."/>
            <person name="Blair E."/>
            <person name="Cittone H."/>
            <person name="Clark E.B."/>
            <person name="Cotton M.D."/>
            <person name="Utterback T.R."/>
            <person name="Khouri H.M."/>
            <person name="Qin H."/>
            <person name="Vamathevan J.J."/>
            <person name="Gill J."/>
            <person name="Scarlato V."/>
            <person name="Masignani V."/>
            <person name="Pizza M."/>
            <person name="Grandi G."/>
            <person name="Sun L."/>
            <person name="Smith H.O."/>
            <person name="Fraser C.M."/>
            <person name="Moxon E.R."/>
            <person name="Rappuoli R."/>
            <person name="Venter J.C."/>
        </authorList>
    </citation>
    <scope>NUCLEOTIDE SEQUENCE [LARGE SCALE GENOMIC DNA]</scope>
    <source>
        <strain>ATCC BAA-335 / MC58</strain>
    </source>
</reference>
<reference key="2">
    <citation type="journal article" date="2005" name="Hum. Vaccin.">
        <title>Characterization of the protein content of a meningococcal outer membrane vesicle vaccine by polyacrylamide gel electrophoresis and mass spectrometry.</title>
        <authorList>
            <person name="Vipond C."/>
            <person name="Wheeler J.X."/>
            <person name="Jones C."/>
            <person name="Feavers I.M."/>
            <person name="Suker J."/>
        </authorList>
    </citation>
    <scope>IDENTIFICATION BY MASS SPECTROMETRY [LARGE SCALE ANALYSIS]</scope>
</reference>